<comment type="function">
    <text evidence="1">One of the primary rRNA binding proteins, it binds directly near the 3'-end of the 23S rRNA, where it nucleates assembly of the 50S subunit.</text>
</comment>
<comment type="subunit">
    <text evidence="1">Part of the 50S ribosomal subunit. Forms a cluster with proteins L14 and L19.</text>
</comment>
<comment type="similarity">
    <text evidence="1">Belongs to the universal ribosomal protein uL3 family.</text>
</comment>
<name>RL3_STAAN</name>
<proteinExistence type="evidence at protein level"/>
<keyword id="KW-0687">Ribonucleoprotein</keyword>
<keyword id="KW-0689">Ribosomal protein</keyword>
<keyword id="KW-0694">RNA-binding</keyword>
<keyword id="KW-0699">rRNA-binding</keyword>
<gene>
    <name evidence="1" type="primary">rplC</name>
    <name type="ordered locus">SA2047</name>
</gene>
<feature type="chain" id="PRO_0000077155" description="Large ribosomal subunit protein uL3">
    <location>
        <begin position="1"/>
        <end position="220"/>
    </location>
</feature>
<feature type="region of interest" description="Disordered" evidence="2">
    <location>
        <begin position="130"/>
        <end position="156"/>
    </location>
</feature>
<organism>
    <name type="scientific">Staphylococcus aureus (strain N315)</name>
    <dbReference type="NCBI Taxonomy" id="158879"/>
    <lineage>
        <taxon>Bacteria</taxon>
        <taxon>Bacillati</taxon>
        <taxon>Bacillota</taxon>
        <taxon>Bacilli</taxon>
        <taxon>Bacillales</taxon>
        <taxon>Staphylococcaceae</taxon>
        <taxon>Staphylococcus</taxon>
    </lineage>
</organism>
<protein>
    <recommendedName>
        <fullName evidence="1">Large ribosomal subunit protein uL3</fullName>
    </recommendedName>
    <alternativeName>
        <fullName evidence="3">50S ribosomal protein L3</fullName>
    </alternativeName>
</protein>
<sequence length="220" mass="23718">MTKGILGRKIGMTQVFGENGELIPVTVVEAKENVVLQKKTVEVDGYNAIQVGFEDKKAYKKDAKSNKYANKPAEGHAKKADAAPKRFIREFRNVDVDAYEVGQEVSVDTFVAGDVIDVTGVSKGKGFQGAIKRHGQSRGPMSHGSHFHRAPGSVGMASDASRVFKGQKMPGRMGGNTVTVQNLEVVQVDTENKVILVKGNVPGPKKGLVEIRTSIKKGNK</sequence>
<accession>P60449</accession>
<accession>Q99S21</accession>
<dbReference type="EMBL" id="BA000018">
    <property type="protein sequence ID" value="BAB43342.1"/>
    <property type="molecule type" value="Genomic_DNA"/>
</dbReference>
<dbReference type="PIR" id="E90022">
    <property type="entry name" value="E90022"/>
</dbReference>
<dbReference type="RefSeq" id="WP_000160212.1">
    <property type="nucleotide sequence ID" value="NC_002745.2"/>
</dbReference>
<dbReference type="SMR" id="P60449"/>
<dbReference type="EnsemblBacteria" id="BAB43342">
    <property type="protein sequence ID" value="BAB43342"/>
    <property type="gene ID" value="BAB43342"/>
</dbReference>
<dbReference type="GeneID" id="98346562"/>
<dbReference type="KEGG" id="sau:SA2047"/>
<dbReference type="HOGENOM" id="CLU_044142_4_1_9"/>
<dbReference type="GO" id="GO:0022625">
    <property type="term" value="C:cytosolic large ribosomal subunit"/>
    <property type="evidence" value="ECO:0007669"/>
    <property type="project" value="TreeGrafter"/>
</dbReference>
<dbReference type="GO" id="GO:0019843">
    <property type="term" value="F:rRNA binding"/>
    <property type="evidence" value="ECO:0007669"/>
    <property type="project" value="UniProtKB-UniRule"/>
</dbReference>
<dbReference type="GO" id="GO:0003735">
    <property type="term" value="F:structural constituent of ribosome"/>
    <property type="evidence" value="ECO:0007669"/>
    <property type="project" value="InterPro"/>
</dbReference>
<dbReference type="GO" id="GO:0006412">
    <property type="term" value="P:translation"/>
    <property type="evidence" value="ECO:0007669"/>
    <property type="project" value="UniProtKB-UniRule"/>
</dbReference>
<dbReference type="FunFam" id="2.40.30.10:FF:000004">
    <property type="entry name" value="50S ribosomal protein L3"/>
    <property type="match status" value="1"/>
</dbReference>
<dbReference type="FunFam" id="3.30.160.810:FF:000002">
    <property type="entry name" value="50S ribosomal protein L3"/>
    <property type="match status" value="1"/>
</dbReference>
<dbReference type="Gene3D" id="3.30.160.810">
    <property type="match status" value="1"/>
</dbReference>
<dbReference type="Gene3D" id="2.40.30.10">
    <property type="entry name" value="Translation factors"/>
    <property type="match status" value="1"/>
</dbReference>
<dbReference type="HAMAP" id="MF_01325_B">
    <property type="entry name" value="Ribosomal_uL3_B"/>
    <property type="match status" value="1"/>
</dbReference>
<dbReference type="InterPro" id="IPR000597">
    <property type="entry name" value="Ribosomal_uL3"/>
</dbReference>
<dbReference type="InterPro" id="IPR019927">
    <property type="entry name" value="Ribosomal_uL3_bac/org-type"/>
</dbReference>
<dbReference type="InterPro" id="IPR019926">
    <property type="entry name" value="Ribosomal_uL3_CS"/>
</dbReference>
<dbReference type="InterPro" id="IPR009000">
    <property type="entry name" value="Transl_B-barrel_sf"/>
</dbReference>
<dbReference type="NCBIfam" id="TIGR03625">
    <property type="entry name" value="L3_bact"/>
    <property type="match status" value="1"/>
</dbReference>
<dbReference type="PANTHER" id="PTHR11229">
    <property type="entry name" value="50S RIBOSOMAL PROTEIN L3"/>
    <property type="match status" value="1"/>
</dbReference>
<dbReference type="PANTHER" id="PTHR11229:SF16">
    <property type="entry name" value="LARGE RIBOSOMAL SUBUNIT PROTEIN UL3C"/>
    <property type="match status" value="1"/>
</dbReference>
<dbReference type="Pfam" id="PF00297">
    <property type="entry name" value="Ribosomal_L3"/>
    <property type="match status" value="1"/>
</dbReference>
<dbReference type="SUPFAM" id="SSF50447">
    <property type="entry name" value="Translation proteins"/>
    <property type="match status" value="1"/>
</dbReference>
<dbReference type="PROSITE" id="PS00474">
    <property type="entry name" value="RIBOSOMAL_L3"/>
    <property type="match status" value="1"/>
</dbReference>
<reference key="1">
    <citation type="journal article" date="2001" name="Lancet">
        <title>Whole genome sequencing of meticillin-resistant Staphylococcus aureus.</title>
        <authorList>
            <person name="Kuroda M."/>
            <person name="Ohta T."/>
            <person name="Uchiyama I."/>
            <person name="Baba T."/>
            <person name="Yuzawa H."/>
            <person name="Kobayashi I."/>
            <person name="Cui L."/>
            <person name="Oguchi A."/>
            <person name="Aoki K."/>
            <person name="Nagai Y."/>
            <person name="Lian J.-Q."/>
            <person name="Ito T."/>
            <person name="Kanamori M."/>
            <person name="Matsumaru H."/>
            <person name="Maruyama A."/>
            <person name="Murakami H."/>
            <person name="Hosoyama A."/>
            <person name="Mizutani-Ui Y."/>
            <person name="Takahashi N.K."/>
            <person name="Sawano T."/>
            <person name="Inoue R."/>
            <person name="Kaito C."/>
            <person name="Sekimizu K."/>
            <person name="Hirakawa H."/>
            <person name="Kuhara S."/>
            <person name="Goto S."/>
            <person name="Yabuzaki J."/>
            <person name="Kanehisa M."/>
            <person name="Yamashita A."/>
            <person name="Oshima K."/>
            <person name="Furuya K."/>
            <person name="Yoshino C."/>
            <person name="Shiba T."/>
            <person name="Hattori M."/>
            <person name="Ogasawara N."/>
            <person name="Hayashi H."/>
            <person name="Hiramatsu K."/>
        </authorList>
    </citation>
    <scope>NUCLEOTIDE SEQUENCE [LARGE SCALE GENOMIC DNA]</scope>
    <source>
        <strain>N315</strain>
    </source>
</reference>
<reference key="2">
    <citation type="submission" date="2007-10" db="UniProtKB">
        <title>Shotgun proteomic analysis of total and membrane protein extracts of S. aureus strain N315.</title>
        <authorList>
            <person name="Vaezzadeh A.R."/>
            <person name="Deshusses J."/>
            <person name="Lescuyer P."/>
            <person name="Hochstrasser D.F."/>
        </authorList>
    </citation>
    <scope>IDENTIFICATION BY MASS SPECTROMETRY [LARGE SCALE ANALYSIS]</scope>
    <source>
        <strain>N315</strain>
    </source>
</reference>
<evidence type="ECO:0000255" key="1">
    <source>
        <dbReference type="HAMAP-Rule" id="MF_01325"/>
    </source>
</evidence>
<evidence type="ECO:0000256" key="2">
    <source>
        <dbReference type="SAM" id="MobiDB-lite"/>
    </source>
</evidence>
<evidence type="ECO:0000305" key="3"/>